<dbReference type="EC" id="3.1.-.-" evidence="1"/>
<dbReference type="EMBL" id="CP001337">
    <property type="protein sequence ID" value="ACL23047.1"/>
    <property type="molecule type" value="Genomic_DNA"/>
</dbReference>
<dbReference type="RefSeq" id="WP_012615413.1">
    <property type="nucleotide sequence ID" value="NC_011831.1"/>
</dbReference>
<dbReference type="SMR" id="B8GC73"/>
<dbReference type="STRING" id="326427.Cagg_0094"/>
<dbReference type="KEGG" id="cag:Cagg_0094"/>
<dbReference type="eggNOG" id="COG0816">
    <property type="taxonomic scope" value="Bacteria"/>
</dbReference>
<dbReference type="HOGENOM" id="CLU_098240_2_0_0"/>
<dbReference type="OrthoDB" id="9796140at2"/>
<dbReference type="Proteomes" id="UP000002508">
    <property type="component" value="Chromosome"/>
</dbReference>
<dbReference type="GO" id="GO:0005829">
    <property type="term" value="C:cytosol"/>
    <property type="evidence" value="ECO:0007669"/>
    <property type="project" value="TreeGrafter"/>
</dbReference>
<dbReference type="GO" id="GO:0004518">
    <property type="term" value="F:nuclease activity"/>
    <property type="evidence" value="ECO:0007669"/>
    <property type="project" value="UniProtKB-KW"/>
</dbReference>
<dbReference type="GO" id="GO:0000967">
    <property type="term" value="P:rRNA 5'-end processing"/>
    <property type="evidence" value="ECO:0007669"/>
    <property type="project" value="UniProtKB-UniRule"/>
</dbReference>
<dbReference type="CDD" id="cd16964">
    <property type="entry name" value="YqgF"/>
    <property type="match status" value="1"/>
</dbReference>
<dbReference type="Gene3D" id="3.30.420.140">
    <property type="entry name" value="YqgF/RNase H-like domain"/>
    <property type="match status" value="1"/>
</dbReference>
<dbReference type="HAMAP" id="MF_00651">
    <property type="entry name" value="Nuclease_YqgF"/>
    <property type="match status" value="1"/>
</dbReference>
<dbReference type="InterPro" id="IPR012337">
    <property type="entry name" value="RNaseH-like_sf"/>
</dbReference>
<dbReference type="InterPro" id="IPR005227">
    <property type="entry name" value="YqgF"/>
</dbReference>
<dbReference type="InterPro" id="IPR006641">
    <property type="entry name" value="YqgF/RNaseH-like_dom"/>
</dbReference>
<dbReference type="InterPro" id="IPR037027">
    <property type="entry name" value="YqgF/RNaseH-like_dom_sf"/>
</dbReference>
<dbReference type="NCBIfam" id="TIGR00250">
    <property type="entry name" value="RNAse_H_YqgF"/>
    <property type="match status" value="1"/>
</dbReference>
<dbReference type="PANTHER" id="PTHR33317">
    <property type="entry name" value="POLYNUCLEOTIDYL TRANSFERASE, RIBONUCLEASE H-LIKE SUPERFAMILY PROTEIN"/>
    <property type="match status" value="1"/>
</dbReference>
<dbReference type="PANTHER" id="PTHR33317:SF4">
    <property type="entry name" value="POLYNUCLEOTIDYL TRANSFERASE, RIBONUCLEASE H-LIKE SUPERFAMILY PROTEIN"/>
    <property type="match status" value="1"/>
</dbReference>
<dbReference type="Pfam" id="PF03652">
    <property type="entry name" value="RuvX"/>
    <property type="match status" value="1"/>
</dbReference>
<dbReference type="SMART" id="SM00732">
    <property type="entry name" value="YqgFc"/>
    <property type="match status" value="1"/>
</dbReference>
<dbReference type="SUPFAM" id="SSF53098">
    <property type="entry name" value="Ribonuclease H-like"/>
    <property type="match status" value="1"/>
</dbReference>
<accession>B8GC73</accession>
<evidence type="ECO:0000255" key="1">
    <source>
        <dbReference type="HAMAP-Rule" id="MF_00651"/>
    </source>
</evidence>
<keyword id="KW-0963">Cytoplasm</keyword>
<keyword id="KW-0378">Hydrolase</keyword>
<keyword id="KW-0540">Nuclease</keyword>
<keyword id="KW-0690">Ribosome biogenesis</keyword>
<sequence>MNEQTILGLDVGERRIGVAISDVEARIAAPLTTIPAHPPERAIAQIARLVAERGVRRVVVGLPLTMRGEHGPQAAAIQRFVDALAAVLNCPVEMFDERLTSVAAEQMLRNLGVKPAKIKEQIDQVAASIILQDYLDARRNPF</sequence>
<name>YQGF_CHLAD</name>
<gene>
    <name type="ordered locus">Cagg_0094</name>
</gene>
<protein>
    <recommendedName>
        <fullName evidence="1">Putative pre-16S rRNA nuclease</fullName>
        <ecNumber evidence="1">3.1.-.-</ecNumber>
    </recommendedName>
</protein>
<comment type="function">
    <text evidence="1">Could be a nuclease involved in processing of the 5'-end of pre-16S rRNA.</text>
</comment>
<comment type="subcellular location">
    <subcellularLocation>
        <location evidence="1">Cytoplasm</location>
    </subcellularLocation>
</comment>
<comment type="similarity">
    <text evidence="1">Belongs to the YqgF nuclease family.</text>
</comment>
<reference key="1">
    <citation type="submission" date="2008-12" db="EMBL/GenBank/DDBJ databases">
        <title>Complete sequence of Chloroflexus aggregans DSM 9485.</title>
        <authorList>
            <consortium name="US DOE Joint Genome Institute"/>
            <person name="Lucas S."/>
            <person name="Copeland A."/>
            <person name="Lapidus A."/>
            <person name="Glavina del Rio T."/>
            <person name="Dalin E."/>
            <person name="Tice H."/>
            <person name="Pitluck S."/>
            <person name="Foster B."/>
            <person name="Larimer F."/>
            <person name="Land M."/>
            <person name="Hauser L."/>
            <person name="Kyrpides N."/>
            <person name="Mikhailova N."/>
            <person name="Bryant D.A."/>
            <person name="Richardson P."/>
        </authorList>
    </citation>
    <scope>NUCLEOTIDE SEQUENCE [LARGE SCALE GENOMIC DNA]</scope>
    <source>
        <strain>MD-66 / DSM 9485</strain>
    </source>
</reference>
<organism>
    <name type="scientific">Chloroflexus aggregans (strain MD-66 / DSM 9485)</name>
    <dbReference type="NCBI Taxonomy" id="326427"/>
    <lineage>
        <taxon>Bacteria</taxon>
        <taxon>Bacillati</taxon>
        <taxon>Chloroflexota</taxon>
        <taxon>Chloroflexia</taxon>
        <taxon>Chloroflexales</taxon>
        <taxon>Chloroflexineae</taxon>
        <taxon>Chloroflexaceae</taxon>
        <taxon>Chloroflexus</taxon>
    </lineage>
</organism>
<proteinExistence type="inferred from homology"/>
<feature type="chain" id="PRO_1000147470" description="Putative pre-16S rRNA nuclease">
    <location>
        <begin position="1"/>
        <end position="142"/>
    </location>
</feature>